<comment type="function">
    <text evidence="1">Regulator of type 1 phosphatases which maintains protein phosphatase activity under strict control.</text>
</comment>
<comment type="subcellular location">
    <subcellularLocation>
        <location evidence="1">Nucleus</location>
    </subcellularLocation>
</comment>
<comment type="similarity">
    <text evidence="3">Belongs to the YPI1 family.</text>
</comment>
<name>YPI1_KLULA</name>
<dbReference type="EMBL" id="CR382125">
    <property type="protein sequence ID" value="CAG99676.1"/>
    <property type="molecule type" value="Genomic_DNA"/>
</dbReference>
<dbReference type="RefSeq" id="XP_454589.1">
    <property type="nucleotide sequence ID" value="XM_454589.1"/>
</dbReference>
<dbReference type="FunCoup" id="Q6CNA0">
    <property type="interactions" value="176"/>
</dbReference>
<dbReference type="STRING" id="284590.Q6CNA0"/>
<dbReference type="PaxDb" id="284590-Q6CNA0"/>
<dbReference type="KEGG" id="kla:KLLA0_E14169g"/>
<dbReference type="eggNOG" id="KOG4102">
    <property type="taxonomic scope" value="Eukaryota"/>
</dbReference>
<dbReference type="HOGENOM" id="CLU_098333_3_0_1"/>
<dbReference type="InParanoid" id="Q6CNA0"/>
<dbReference type="OMA" id="RRHIQWA"/>
<dbReference type="Proteomes" id="UP000000598">
    <property type="component" value="Chromosome E"/>
</dbReference>
<dbReference type="GO" id="GO:0005634">
    <property type="term" value="C:nucleus"/>
    <property type="evidence" value="ECO:0007669"/>
    <property type="project" value="UniProtKB-SubCell"/>
</dbReference>
<dbReference type="GO" id="GO:0008157">
    <property type="term" value="F:protein phosphatase 1 binding"/>
    <property type="evidence" value="ECO:0007669"/>
    <property type="project" value="TreeGrafter"/>
</dbReference>
<dbReference type="GO" id="GO:0004865">
    <property type="term" value="F:protein serine/threonine phosphatase inhibitor activity"/>
    <property type="evidence" value="ECO:0007669"/>
    <property type="project" value="InterPro"/>
</dbReference>
<dbReference type="InterPro" id="IPR011107">
    <property type="entry name" value="PPI_Ypi1"/>
</dbReference>
<dbReference type="PANTHER" id="PTHR20835:SF0">
    <property type="entry name" value="E3 UBIQUITIN-PROTEIN LIGASE PPP1R11"/>
    <property type="match status" value="1"/>
</dbReference>
<dbReference type="PANTHER" id="PTHR20835">
    <property type="entry name" value="E3 UBIQUITIN-PROTEIN LIGASE PPP1R11-RELATED"/>
    <property type="match status" value="1"/>
</dbReference>
<dbReference type="Pfam" id="PF07491">
    <property type="entry name" value="PPI_Ypi1"/>
    <property type="match status" value="1"/>
</dbReference>
<sequence>MSEGPSALPEGTHTVTVTEVPQLLQLRAGQNEKNKTKKKDTKSKVRWDEKVIDNENMNKKKTKICCIFHPNTPLESDEEEEGECEHDHNHGHDSSSSSSSSSSDEDEGKSFDERRKARLERRRKKLEQKRPPSPNAYEVQPDYSAYRDKNRKDAQ</sequence>
<feature type="chain" id="PRO_0000333476" description="Type 1 phosphatases regulator YPI1">
    <location>
        <begin position="1"/>
        <end position="155"/>
    </location>
</feature>
<feature type="region of interest" description="Disordered" evidence="2">
    <location>
        <begin position="1"/>
        <end position="47"/>
    </location>
</feature>
<feature type="region of interest" description="Disordered" evidence="2">
    <location>
        <begin position="72"/>
        <end position="155"/>
    </location>
</feature>
<feature type="compositionally biased region" description="Acidic residues" evidence="2">
    <location>
        <begin position="75"/>
        <end position="84"/>
    </location>
</feature>
<feature type="compositionally biased region" description="Basic residues" evidence="2">
    <location>
        <begin position="116"/>
        <end position="127"/>
    </location>
</feature>
<feature type="compositionally biased region" description="Basic and acidic residues" evidence="2">
    <location>
        <begin position="145"/>
        <end position="155"/>
    </location>
</feature>
<evidence type="ECO:0000250" key="1"/>
<evidence type="ECO:0000256" key="2">
    <source>
        <dbReference type="SAM" id="MobiDB-lite"/>
    </source>
</evidence>
<evidence type="ECO:0000305" key="3"/>
<gene>
    <name type="primary">YPI1</name>
    <name type="ordered locus">KLLA0E14212g</name>
</gene>
<proteinExistence type="inferred from homology"/>
<organism>
    <name type="scientific">Kluyveromyces lactis (strain ATCC 8585 / CBS 2359 / DSM 70799 / NBRC 1267 / NRRL Y-1140 / WM37)</name>
    <name type="common">Yeast</name>
    <name type="synonym">Candida sphaerica</name>
    <dbReference type="NCBI Taxonomy" id="284590"/>
    <lineage>
        <taxon>Eukaryota</taxon>
        <taxon>Fungi</taxon>
        <taxon>Dikarya</taxon>
        <taxon>Ascomycota</taxon>
        <taxon>Saccharomycotina</taxon>
        <taxon>Saccharomycetes</taxon>
        <taxon>Saccharomycetales</taxon>
        <taxon>Saccharomycetaceae</taxon>
        <taxon>Kluyveromyces</taxon>
    </lineage>
</organism>
<protein>
    <recommendedName>
        <fullName>Type 1 phosphatases regulator YPI1</fullName>
    </recommendedName>
</protein>
<accession>Q6CNA0</accession>
<reference key="1">
    <citation type="journal article" date="2004" name="Nature">
        <title>Genome evolution in yeasts.</title>
        <authorList>
            <person name="Dujon B."/>
            <person name="Sherman D."/>
            <person name="Fischer G."/>
            <person name="Durrens P."/>
            <person name="Casaregola S."/>
            <person name="Lafontaine I."/>
            <person name="de Montigny J."/>
            <person name="Marck C."/>
            <person name="Neuveglise C."/>
            <person name="Talla E."/>
            <person name="Goffard N."/>
            <person name="Frangeul L."/>
            <person name="Aigle M."/>
            <person name="Anthouard V."/>
            <person name="Babour A."/>
            <person name="Barbe V."/>
            <person name="Barnay S."/>
            <person name="Blanchin S."/>
            <person name="Beckerich J.-M."/>
            <person name="Beyne E."/>
            <person name="Bleykasten C."/>
            <person name="Boisrame A."/>
            <person name="Boyer J."/>
            <person name="Cattolico L."/>
            <person name="Confanioleri F."/>
            <person name="de Daruvar A."/>
            <person name="Despons L."/>
            <person name="Fabre E."/>
            <person name="Fairhead C."/>
            <person name="Ferry-Dumazet H."/>
            <person name="Groppi A."/>
            <person name="Hantraye F."/>
            <person name="Hennequin C."/>
            <person name="Jauniaux N."/>
            <person name="Joyet P."/>
            <person name="Kachouri R."/>
            <person name="Kerrest A."/>
            <person name="Koszul R."/>
            <person name="Lemaire M."/>
            <person name="Lesur I."/>
            <person name="Ma L."/>
            <person name="Muller H."/>
            <person name="Nicaud J.-M."/>
            <person name="Nikolski M."/>
            <person name="Oztas S."/>
            <person name="Ozier-Kalogeropoulos O."/>
            <person name="Pellenz S."/>
            <person name="Potier S."/>
            <person name="Richard G.-F."/>
            <person name="Straub M.-L."/>
            <person name="Suleau A."/>
            <person name="Swennen D."/>
            <person name="Tekaia F."/>
            <person name="Wesolowski-Louvel M."/>
            <person name="Westhof E."/>
            <person name="Wirth B."/>
            <person name="Zeniou-Meyer M."/>
            <person name="Zivanovic Y."/>
            <person name="Bolotin-Fukuhara M."/>
            <person name="Thierry A."/>
            <person name="Bouchier C."/>
            <person name="Caudron B."/>
            <person name="Scarpelli C."/>
            <person name="Gaillardin C."/>
            <person name="Weissenbach J."/>
            <person name="Wincker P."/>
            <person name="Souciet J.-L."/>
        </authorList>
    </citation>
    <scope>NUCLEOTIDE SEQUENCE [LARGE SCALE GENOMIC DNA]</scope>
    <source>
        <strain>ATCC 8585 / CBS 2359 / DSM 70799 / NBRC 1267 / NRRL Y-1140 / WM37</strain>
    </source>
</reference>
<keyword id="KW-0539">Nucleus</keyword>
<keyword id="KW-1185">Reference proteome</keyword>